<evidence type="ECO:0000255" key="1">
    <source>
        <dbReference type="HAMAP-Rule" id="MF_00123"/>
    </source>
</evidence>
<organism>
    <name type="scientific">Clostridium kluyveri (strain NBRC 12016)</name>
    <dbReference type="NCBI Taxonomy" id="583346"/>
    <lineage>
        <taxon>Bacteria</taxon>
        <taxon>Bacillati</taxon>
        <taxon>Bacillota</taxon>
        <taxon>Clostridia</taxon>
        <taxon>Eubacteriales</taxon>
        <taxon>Clostridiaceae</taxon>
        <taxon>Clostridium</taxon>
    </lineage>
</organism>
<sequence length="566" mass="65277">MDFKKLAAEEIKKNIDLELNFIEGLIEVPPKPEMGDYAFPCFQLAKVLKKAPNIISKELKDKLHSKYFEKIENLGPYVNFFVDKKIFTEYTLKEILLKGDSYGSSDMGEGKNVVVEYSSPNIAKPFHVGHLFSTSIGNALYKMINFQGYNCTRINHLGDWGTQFGKLIAAYNRWCNAEELNRDPIKELLRIYVKFHEEAEKDPSLNEEGRMYFKKLEDGSEEEIKLWKKFKDLSLREFKKVYDLLKVDFDSYAGESFYTDKMDAVVEEIDKKGLLVESNGAKVVLLDEYNIPPCIVKKSDGTTIYATRDLAAAIYRKKTYDFYKSIYVVGLDQSLHFKQVFTTLKLMGKDWADSCKHVGFGLVRFANKKLSTRKGDVIFLEELLNKSVERTLEIINEKNPKLENKEEAAKKIGIGAVIFTYLKNNREKDIVFDWNEMLSFEGETGPYVQYSYARGKSILRKSEEASYDENQIDYSKLGSKEEFELVKILENFNKSIINAINRLEPFIVTRYVIDVAKAFNKFYNAHSIMNAADENIKKARLYLVKCTCQVLKNGLNLMGIEVVEKM</sequence>
<protein>
    <recommendedName>
        <fullName evidence="1">Arginine--tRNA ligase</fullName>
        <ecNumber evidence="1">6.1.1.19</ecNumber>
    </recommendedName>
    <alternativeName>
        <fullName evidence="1">Arginyl-tRNA synthetase</fullName>
        <shortName evidence="1">ArgRS</shortName>
    </alternativeName>
</protein>
<name>SYR_CLOK1</name>
<dbReference type="EC" id="6.1.1.19" evidence="1"/>
<dbReference type="EMBL" id="AP009049">
    <property type="protein sequence ID" value="BAH06490.1"/>
    <property type="molecule type" value="Genomic_DNA"/>
</dbReference>
<dbReference type="RefSeq" id="WP_012101940.1">
    <property type="nucleotide sequence ID" value="NC_011837.1"/>
</dbReference>
<dbReference type="SMR" id="B9E1W5"/>
<dbReference type="KEGG" id="ckr:CKR_1439"/>
<dbReference type="HOGENOM" id="CLU_006406_6_1_9"/>
<dbReference type="Proteomes" id="UP000007969">
    <property type="component" value="Chromosome"/>
</dbReference>
<dbReference type="GO" id="GO:0005737">
    <property type="term" value="C:cytoplasm"/>
    <property type="evidence" value="ECO:0007669"/>
    <property type="project" value="UniProtKB-SubCell"/>
</dbReference>
<dbReference type="GO" id="GO:0004814">
    <property type="term" value="F:arginine-tRNA ligase activity"/>
    <property type="evidence" value="ECO:0007669"/>
    <property type="project" value="UniProtKB-UniRule"/>
</dbReference>
<dbReference type="GO" id="GO:0005524">
    <property type="term" value="F:ATP binding"/>
    <property type="evidence" value="ECO:0007669"/>
    <property type="project" value="UniProtKB-UniRule"/>
</dbReference>
<dbReference type="GO" id="GO:0006420">
    <property type="term" value="P:arginyl-tRNA aminoacylation"/>
    <property type="evidence" value="ECO:0007669"/>
    <property type="project" value="UniProtKB-UniRule"/>
</dbReference>
<dbReference type="CDD" id="cd07956">
    <property type="entry name" value="Anticodon_Ia_Arg"/>
    <property type="match status" value="1"/>
</dbReference>
<dbReference type="CDD" id="cd00671">
    <property type="entry name" value="ArgRS_core"/>
    <property type="match status" value="1"/>
</dbReference>
<dbReference type="FunFam" id="1.10.730.10:FF:000008">
    <property type="entry name" value="Arginine--tRNA ligase"/>
    <property type="match status" value="1"/>
</dbReference>
<dbReference type="FunFam" id="3.40.50.620:FF:000116">
    <property type="entry name" value="Arginine--tRNA ligase"/>
    <property type="match status" value="1"/>
</dbReference>
<dbReference type="Gene3D" id="3.30.1360.70">
    <property type="entry name" value="Arginyl tRNA synthetase N-terminal domain"/>
    <property type="match status" value="1"/>
</dbReference>
<dbReference type="Gene3D" id="3.40.50.620">
    <property type="entry name" value="HUPs"/>
    <property type="match status" value="1"/>
</dbReference>
<dbReference type="Gene3D" id="1.10.730.10">
    <property type="entry name" value="Isoleucyl-tRNA Synthetase, Domain 1"/>
    <property type="match status" value="1"/>
</dbReference>
<dbReference type="HAMAP" id="MF_00123">
    <property type="entry name" value="Arg_tRNA_synth"/>
    <property type="match status" value="1"/>
</dbReference>
<dbReference type="InterPro" id="IPR001412">
    <property type="entry name" value="aa-tRNA-synth_I_CS"/>
</dbReference>
<dbReference type="InterPro" id="IPR001278">
    <property type="entry name" value="Arg-tRNA-ligase"/>
</dbReference>
<dbReference type="InterPro" id="IPR005148">
    <property type="entry name" value="Arg-tRNA-synth_N"/>
</dbReference>
<dbReference type="InterPro" id="IPR036695">
    <property type="entry name" value="Arg-tRNA-synth_N_sf"/>
</dbReference>
<dbReference type="InterPro" id="IPR035684">
    <property type="entry name" value="ArgRS_core"/>
</dbReference>
<dbReference type="InterPro" id="IPR008909">
    <property type="entry name" value="DALR_anticod-bd"/>
</dbReference>
<dbReference type="InterPro" id="IPR014729">
    <property type="entry name" value="Rossmann-like_a/b/a_fold"/>
</dbReference>
<dbReference type="InterPro" id="IPR009080">
    <property type="entry name" value="tRNAsynth_Ia_anticodon-bd"/>
</dbReference>
<dbReference type="NCBIfam" id="TIGR00456">
    <property type="entry name" value="argS"/>
    <property type="match status" value="1"/>
</dbReference>
<dbReference type="PANTHER" id="PTHR11956:SF5">
    <property type="entry name" value="ARGININE--TRNA LIGASE, CYTOPLASMIC"/>
    <property type="match status" value="1"/>
</dbReference>
<dbReference type="PANTHER" id="PTHR11956">
    <property type="entry name" value="ARGINYL-TRNA SYNTHETASE"/>
    <property type="match status" value="1"/>
</dbReference>
<dbReference type="Pfam" id="PF03485">
    <property type="entry name" value="Arg_tRNA_synt_N"/>
    <property type="match status" value="1"/>
</dbReference>
<dbReference type="Pfam" id="PF05746">
    <property type="entry name" value="DALR_1"/>
    <property type="match status" value="1"/>
</dbReference>
<dbReference type="Pfam" id="PF00750">
    <property type="entry name" value="tRNA-synt_1d"/>
    <property type="match status" value="1"/>
</dbReference>
<dbReference type="PRINTS" id="PR01038">
    <property type="entry name" value="TRNASYNTHARG"/>
</dbReference>
<dbReference type="SMART" id="SM01016">
    <property type="entry name" value="Arg_tRNA_synt_N"/>
    <property type="match status" value="1"/>
</dbReference>
<dbReference type="SMART" id="SM00836">
    <property type="entry name" value="DALR_1"/>
    <property type="match status" value="1"/>
</dbReference>
<dbReference type="SUPFAM" id="SSF47323">
    <property type="entry name" value="Anticodon-binding domain of a subclass of class I aminoacyl-tRNA synthetases"/>
    <property type="match status" value="1"/>
</dbReference>
<dbReference type="SUPFAM" id="SSF55190">
    <property type="entry name" value="Arginyl-tRNA synthetase (ArgRS), N-terminal 'additional' domain"/>
    <property type="match status" value="1"/>
</dbReference>
<dbReference type="SUPFAM" id="SSF52374">
    <property type="entry name" value="Nucleotidylyl transferase"/>
    <property type="match status" value="1"/>
</dbReference>
<dbReference type="PROSITE" id="PS00178">
    <property type="entry name" value="AA_TRNA_LIGASE_I"/>
    <property type="match status" value="1"/>
</dbReference>
<comment type="catalytic activity">
    <reaction evidence="1">
        <text>tRNA(Arg) + L-arginine + ATP = L-arginyl-tRNA(Arg) + AMP + diphosphate</text>
        <dbReference type="Rhea" id="RHEA:20301"/>
        <dbReference type="Rhea" id="RHEA-COMP:9658"/>
        <dbReference type="Rhea" id="RHEA-COMP:9673"/>
        <dbReference type="ChEBI" id="CHEBI:30616"/>
        <dbReference type="ChEBI" id="CHEBI:32682"/>
        <dbReference type="ChEBI" id="CHEBI:33019"/>
        <dbReference type="ChEBI" id="CHEBI:78442"/>
        <dbReference type="ChEBI" id="CHEBI:78513"/>
        <dbReference type="ChEBI" id="CHEBI:456215"/>
        <dbReference type="EC" id="6.1.1.19"/>
    </reaction>
</comment>
<comment type="subunit">
    <text evidence="1">Monomer.</text>
</comment>
<comment type="subcellular location">
    <subcellularLocation>
        <location evidence="1">Cytoplasm</location>
    </subcellularLocation>
</comment>
<comment type="similarity">
    <text evidence="1">Belongs to the class-I aminoacyl-tRNA synthetase family.</text>
</comment>
<reference key="1">
    <citation type="submission" date="2005-09" db="EMBL/GenBank/DDBJ databases">
        <title>Complete genome sequence of Clostridium kluyveri and comparative genomics of Clostridia species.</title>
        <authorList>
            <person name="Inui M."/>
            <person name="Nonaka H."/>
            <person name="Shinoda Y."/>
            <person name="Ikenaga Y."/>
            <person name="Abe M."/>
            <person name="Naito K."/>
            <person name="Vertes A.A."/>
            <person name="Yukawa H."/>
        </authorList>
    </citation>
    <scope>NUCLEOTIDE SEQUENCE [LARGE SCALE GENOMIC DNA]</scope>
    <source>
        <strain>NBRC 12016</strain>
    </source>
</reference>
<accession>B9E1W5</accession>
<keyword id="KW-0030">Aminoacyl-tRNA synthetase</keyword>
<keyword id="KW-0067">ATP-binding</keyword>
<keyword id="KW-0963">Cytoplasm</keyword>
<keyword id="KW-0436">Ligase</keyword>
<keyword id="KW-0547">Nucleotide-binding</keyword>
<keyword id="KW-0648">Protein biosynthesis</keyword>
<feature type="chain" id="PRO_1000198888" description="Arginine--tRNA ligase">
    <location>
        <begin position="1"/>
        <end position="566"/>
    </location>
</feature>
<feature type="short sequence motif" description="'HIGH' region">
    <location>
        <begin position="120"/>
        <end position="130"/>
    </location>
</feature>
<proteinExistence type="inferred from homology"/>
<gene>
    <name evidence="1" type="primary">argS</name>
    <name type="ordered locus">CKR_1439</name>
</gene>